<name>TRX1_YEAST</name>
<reference key="1">
    <citation type="journal article" date="1991" name="J. Biol. Chem.">
        <title>Yeast thioredoxin genes.</title>
        <authorList>
            <person name="Gan Z.-R."/>
        </authorList>
    </citation>
    <scope>NUCLEOTIDE SEQUENCE [GENOMIC DNA]</scope>
</reference>
<reference key="2">
    <citation type="journal article" date="1991" name="J. Biol. Chem.">
        <title>Thioredoxin deficiency in yeast prolongs S phase and shortens the G1 interval of the cell cycle.</title>
        <authorList>
            <person name="Muller E.G.D."/>
        </authorList>
    </citation>
    <scope>NUCLEOTIDE SEQUENCE [GENOMIC DNA]</scope>
</reference>
<reference key="3">
    <citation type="journal article" date="1992" name="Yeast">
        <title>Thioredoxin genes in Saccharomyces cerevisiae: map positions of TRX1 and TRX2.</title>
        <authorList>
            <person name="Muller E.G.D."/>
        </authorList>
    </citation>
    <scope>NUCLEOTIDE SEQUENCE [GENOMIC DNA]</scope>
</reference>
<reference key="4">
    <citation type="journal article" date="1997" name="Nature">
        <title>The nucleotide sequence of Saccharomyces cerevisiae chromosome XII.</title>
        <authorList>
            <person name="Johnston M."/>
            <person name="Hillier L.W."/>
            <person name="Riles L."/>
            <person name="Albermann K."/>
            <person name="Andre B."/>
            <person name="Ansorge W."/>
            <person name="Benes V."/>
            <person name="Brueckner M."/>
            <person name="Delius H."/>
            <person name="Dubois E."/>
            <person name="Duesterhoeft A."/>
            <person name="Entian K.-D."/>
            <person name="Floeth M."/>
            <person name="Goffeau A."/>
            <person name="Hebling U."/>
            <person name="Heumann K."/>
            <person name="Heuss-Neitzel D."/>
            <person name="Hilbert H."/>
            <person name="Hilger F."/>
            <person name="Kleine K."/>
            <person name="Koetter P."/>
            <person name="Louis E.J."/>
            <person name="Messenguy F."/>
            <person name="Mewes H.-W."/>
            <person name="Miosga T."/>
            <person name="Moestl D."/>
            <person name="Mueller-Auer S."/>
            <person name="Nentwich U."/>
            <person name="Obermaier B."/>
            <person name="Piravandi E."/>
            <person name="Pohl T.M."/>
            <person name="Portetelle D."/>
            <person name="Purnelle B."/>
            <person name="Rechmann S."/>
            <person name="Rieger M."/>
            <person name="Rinke M."/>
            <person name="Rose M."/>
            <person name="Scharfe M."/>
            <person name="Scherens B."/>
            <person name="Scholler P."/>
            <person name="Schwager C."/>
            <person name="Schwarz S."/>
            <person name="Underwood A.P."/>
            <person name="Urrestarazu L.A."/>
            <person name="Vandenbol M."/>
            <person name="Verhasselt P."/>
            <person name="Vierendeels F."/>
            <person name="Voet M."/>
            <person name="Volckaert G."/>
            <person name="Voss H."/>
            <person name="Wambutt R."/>
            <person name="Wedler E."/>
            <person name="Wedler H."/>
            <person name="Zimmermann F.K."/>
            <person name="Zollner A."/>
            <person name="Hani J."/>
            <person name="Hoheisel J.D."/>
        </authorList>
    </citation>
    <scope>NUCLEOTIDE SEQUENCE [LARGE SCALE GENOMIC DNA]</scope>
    <source>
        <strain>ATCC 204508 / S288c</strain>
    </source>
</reference>
<reference key="5">
    <citation type="journal article" date="2014" name="G3 (Bethesda)">
        <title>The reference genome sequence of Saccharomyces cerevisiae: Then and now.</title>
        <authorList>
            <person name="Engel S.R."/>
            <person name="Dietrich F.S."/>
            <person name="Fisk D.G."/>
            <person name="Binkley G."/>
            <person name="Balakrishnan R."/>
            <person name="Costanzo M.C."/>
            <person name="Dwight S.S."/>
            <person name="Hitz B.C."/>
            <person name="Karra K."/>
            <person name="Nash R.S."/>
            <person name="Weng S."/>
            <person name="Wong E.D."/>
            <person name="Lloyd P."/>
            <person name="Skrzypek M.S."/>
            <person name="Miyasato S.R."/>
            <person name="Simison M."/>
            <person name="Cherry J.M."/>
        </authorList>
    </citation>
    <scope>GENOME REANNOTATION</scope>
    <source>
        <strain>ATCC 204508 / S288c</strain>
    </source>
</reference>
<reference key="6">
    <citation type="journal article" date="2007" name="Genome Res.">
        <title>Approaching a complete repository of sequence-verified protein-encoding clones for Saccharomyces cerevisiae.</title>
        <authorList>
            <person name="Hu Y."/>
            <person name="Rolfs A."/>
            <person name="Bhullar B."/>
            <person name="Murthy T.V.S."/>
            <person name="Zhu C."/>
            <person name="Berger M.F."/>
            <person name="Camargo A.A."/>
            <person name="Kelley F."/>
            <person name="McCarron S."/>
            <person name="Jepson D."/>
            <person name="Richardson A."/>
            <person name="Raphael J."/>
            <person name="Moreira D."/>
            <person name="Taycher E."/>
            <person name="Zuo D."/>
            <person name="Mohr S."/>
            <person name="Kane M.F."/>
            <person name="Williamson J."/>
            <person name="Simpson A.J.G."/>
            <person name="Bulyk M.L."/>
            <person name="Harlow E."/>
            <person name="Marsischky G."/>
            <person name="Kolodner R.D."/>
            <person name="LaBaer J."/>
        </authorList>
    </citation>
    <scope>NUCLEOTIDE SEQUENCE [GENOMIC DNA]</scope>
    <source>
        <strain>ATCC 204508 / S288c</strain>
    </source>
</reference>
<reference key="7">
    <citation type="journal article" date="1994" name="J. Biol. Chem.">
        <title>Thioredoxin-dependent peroxide reductase from yeast.</title>
        <authorList>
            <person name="Chae H.Z."/>
            <person name="Chung S.J."/>
            <person name="Rhee S.G."/>
        </authorList>
    </citation>
    <scope>PROTEIN SEQUENCE OF 2-13</scope>
    <scope>TSA1 DEPENDENCE ON THIOREDOXIN</scope>
    <source>
        <strain>ATCC 200358 / YNN 295</strain>
    </source>
</reference>
<reference key="8">
    <citation type="journal article" date="1996" name="J. Cell Biol.">
        <title>Thioredoxin is required for vacuole inheritance in Saccharomyces cerevisiae.</title>
        <authorList>
            <person name="Xu Z."/>
            <person name="Wickner W."/>
        </authorList>
    </citation>
    <scope>PROTEIN SEQUENCE OF 7-19 AND 43-53</scope>
    <scope>FUNCTION</scope>
    <scope>SUBCELLULAR LOCATION</scope>
    <scope>IDENTIFICATION IN A LMA1 COMPLEX</scope>
</reference>
<reference key="9">
    <citation type="journal article" date="1971" name="Eur. J. Biochem.">
        <title>Yeast thioredoxin. Amino-acid sequence around the active-center disulfide of thioredoxin I and II.</title>
        <authorList>
            <person name="Hall D.E."/>
            <person name="Baldesten A."/>
            <person name="Holmgren A."/>
            <person name="Reichard P."/>
        </authorList>
    </citation>
    <scope>PROTEIN SEQUENCE OF 26-34</scope>
    <scope>REDOX-ACTIVE DISULFIDE BOND</scope>
</reference>
<reference key="10">
    <citation type="journal article" date="1988" name="Arch. Microbiol.">
        <title>Yeast PAPS reductase: properties and requirements of the purified enzyme.</title>
        <authorList>
            <person name="Schwenn J.D."/>
            <person name="Krone F.A."/>
            <person name="Husmann K."/>
        </authorList>
    </citation>
    <scope>FUNCTION</scope>
    <scope>SULFATE ASSIMILATION AND METHIONINE METABOLISM</scope>
</reference>
<reference key="11">
    <citation type="journal article" date="1997" name="J. Cell Biol.">
        <title>A heterodimer of thioredoxin and I(B)2 cooperates with Sec18p (NSF) to promote yeast vacuole inheritance.</title>
        <authorList>
            <person name="Xu Z."/>
            <person name="Mayer A."/>
            <person name="Muller E.G.D."/>
            <person name="Wickner W."/>
        </authorList>
    </citation>
    <scope>FUNCTION</scope>
    <scope>LMA1 COMPLEX</scope>
</reference>
<reference key="12">
    <citation type="journal article" date="1998" name="Cell">
        <title>LMA1 binds to vacuoles at Sec18p (NSF), transfers upon ATP hydrolysis to a t-SNARE (Vam3p) complex, and is released during fusion.</title>
        <authorList>
            <person name="Xu Z."/>
            <person name="Sato K."/>
            <person name="Wickner W."/>
        </authorList>
    </citation>
    <scope>FUNCTION</scope>
    <scope>INTERACTION WITH SEC18</scope>
</reference>
<reference key="13">
    <citation type="journal article" date="2000" name="J. Biol. Chem.">
        <title>Distinct physiological functions of thiol peroxidase isoenzymes in Saccharomyces cerevisiae.</title>
        <authorList>
            <person name="Park S.G."/>
            <person name="Cha M.-K."/>
            <person name="Jeong W."/>
            <person name="Kim I.-H."/>
        </authorList>
    </citation>
    <scope>FUNCTION</scope>
    <scope>DOT5 AND TSA2 DEPENDENCE ON THIOREDOXIN</scope>
</reference>
<reference key="14">
    <citation type="journal article" date="1999" name="J. Biol. Chem.">
        <title>A new antioxidant with alkyl hydroperoxide defense properties in yeast.</title>
        <authorList>
            <person name="Lee J."/>
            <person name="Spector D."/>
            <person name="Godon C."/>
            <person name="Labarre J."/>
            <person name="Toledano M.B."/>
        </authorList>
    </citation>
    <scope>FUNCTION</scope>
    <scope>REDUCTION OF AHP1</scope>
</reference>
<reference key="15">
    <citation type="journal article" date="2002" name="Mol. Microbiol.">
        <title>Thioredoxins are required for protection against a reductive stress in the yeast Saccharomyces cerevisiae.</title>
        <authorList>
            <person name="Trotter E.W."/>
            <person name="Grant C.M."/>
        </authorList>
    </citation>
    <scope>FUNCTION</scope>
    <scope>PROTECTION AGAINST REDUCING STRESS</scope>
</reference>
<reference key="16">
    <citation type="journal article" date="2002" name="Cell">
        <title>A thiol peroxidase is an H2O2 receptor and redox-transducer in gene activation.</title>
        <authorList>
            <person name="Delaunay A."/>
            <person name="Pflieger D."/>
            <person name="Barrault M.-B."/>
            <person name="Vinh J."/>
            <person name="Toledano M.B."/>
        </authorList>
    </citation>
    <scope>FUNCTION</scope>
    <scope>REGULATION OF HYR1/GPX3</scope>
</reference>
<reference key="17">
    <citation type="journal article" date="2000" name="Annu. Rev. Microbiol.">
        <title>Roles of the glutathione- and thioredoxin-dependent reduction systems in the Escherichia coli and Saccharomyces cerevisiae responses to oxidative stress.</title>
        <authorList>
            <person name="Carmel-Harel O."/>
            <person name="Storz G."/>
        </authorList>
    </citation>
    <scope>REVIEW</scope>
    <scope>OXIDATIVE STRESS</scope>
</reference>
<reference key="18">
    <citation type="journal article" date="2001" name="Mol. Microbiol.">
        <title>Role of the glutathione/glutaredoxin and thioredoxin systems in yeast growth and response to stress conditions.</title>
        <authorList>
            <person name="Grant C.M."/>
        </authorList>
    </citation>
    <scope>REVIEW</scope>
</reference>
<reference key="19">
    <citation type="journal article" date="2003" name="Biochim. Biophys. Acta">
        <title>Involvement of LMA1 and GATE-16 family members in intracellular membrane dynamics.</title>
        <authorList>
            <person name="Elazar Z."/>
            <person name="Scherz-Shouval R."/>
            <person name="Shorer H."/>
        </authorList>
    </citation>
    <scope>REVIEW</scope>
    <scope>VESICLE FUSION</scope>
</reference>
<reference key="20">
    <citation type="journal article" date="2003" name="Nature">
        <title>Global analysis of protein localization in budding yeast.</title>
        <authorList>
            <person name="Huh W.-K."/>
            <person name="Falvo J.V."/>
            <person name="Gerke L.C."/>
            <person name="Carroll A.S."/>
            <person name="Howson R.W."/>
            <person name="Weissman J.S."/>
            <person name="O'Shea E.K."/>
        </authorList>
    </citation>
    <scope>SUBCELLULAR LOCATION [LARGE SCALE ANALYSIS]</scope>
</reference>
<reference key="21">
    <citation type="journal article" date="2003" name="Nature">
        <title>Global analysis of protein expression in yeast.</title>
        <authorList>
            <person name="Ghaemmaghami S."/>
            <person name="Huh W.-K."/>
            <person name="Bower K."/>
            <person name="Howson R.W."/>
            <person name="Belle A."/>
            <person name="Dephoure N."/>
            <person name="O'Shea E.K."/>
            <person name="Weissman J.S."/>
        </authorList>
    </citation>
    <scope>LEVEL OF PROTEIN EXPRESSION [LARGE SCALE ANALYSIS]</scope>
</reference>
<reference key="22">
    <citation type="journal article" date="2012" name="Mol. Cell. Proteomics">
        <title>Intermembrane space proteome of yeast mitochondria.</title>
        <authorList>
            <person name="Voegtle F.N."/>
            <person name="Burkhart J.M."/>
            <person name="Rao S."/>
            <person name="Gerbeth C."/>
            <person name="Hinrichs J."/>
            <person name="Martinou J.C."/>
            <person name="Chacinska A."/>
            <person name="Sickmann A."/>
            <person name="Zahedi R.P."/>
            <person name="Meisinger C."/>
        </authorList>
    </citation>
    <scope>IDENTIFICATION BY MASS SPECTROMETRY</scope>
    <scope>SUBCELLULAR LOCATION [LARGE SCALE ANALYSIS]</scope>
</reference>
<reference key="23">
    <citation type="journal article" date="2012" name="Proteomics">
        <title>Sites of ubiquitin attachment in Saccharomyces cerevisiae.</title>
        <authorList>
            <person name="Starita L.M."/>
            <person name="Lo R.S."/>
            <person name="Eng J.K."/>
            <person name="von Haller P.D."/>
            <person name="Fields S."/>
        </authorList>
    </citation>
    <scope>UBIQUITINATION [LARGE SCALE ANALYSIS] AT LYS-54; LYS-66 AND LYS-96</scope>
    <scope>IDENTIFICATION BY MASS SPECTROMETRY [LARGE SCALE ANALYSIS]</scope>
</reference>
<reference key="24">
    <citation type="journal article" date="2008" name="Proteins">
        <title>NMR solution structure of the reduced form of thioredoxin 1 from Saccharomyces cerevisiae.</title>
        <authorList>
            <person name="Pinheiro A.S."/>
            <person name="Amorim G.C."/>
            <person name="Netto L.E."/>
            <person name="Almeida F.C."/>
            <person name="Valente A.P."/>
        </authorList>
    </citation>
    <scope>STRUCTURE BY NMR</scope>
</reference>
<reference key="25">
    <citation type="journal article" date="2009" name="Biochim. Biophys. Acta">
        <title>Structural and kinetic analysis of Saccharomyces cerevisiae thioredoxin Trx1: implications for the catalytic mechanism of GSSG reduced by the thioredoxin system.</title>
        <authorList>
            <person name="Bao R."/>
            <person name="Zhang Y."/>
            <person name="Lou X."/>
            <person name="Zhou C.Z."/>
            <person name="Chen Y."/>
        </authorList>
    </citation>
    <scope>X-RAY CRYSTALLOGRAPHY (1.76 ANGSTROMS)</scope>
    <scope>DISULFIDE BOND</scope>
</reference>
<comment type="function">
    <text evidence="3 4 5 10 12 13 14 15">Participates as a hydrogen donor in redox reactions through the reversible oxidation of its active center dithiol to a disulfide, accompanied by the transfer of 2 electrons and 2 protons. It is involved in many cellular processes, including deoxyribonucleotide synthesis, repair of oxidatively damaged proteins, protein folding, sulfur metabolism, and redox homeostasis. Thioredoxin-dependent enzymes include phosphoadenosine-phosphosulfate reductase MET16, alkyl-hydroperoxide reductase DOT5, thioredoxin peroxidases TSA1 and TSA2, alkyl hydroperoxide reductase AHP1, and peroxiredoxin HYR1. Thioredoxin is also involved in protection against reducing stress. As part of the LMA1 complex, it is involved in the facilitation of vesicle fusion such as homotypic vacuole and ER-derived COPII vesicle fusion with the Golgi. This activity does not require the redox mechanism.</text>
</comment>
<comment type="subunit">
    <text evidence="12 14">Monomer. Part of the heterodimeric LMA1 complex together with the proteinase inhibitor PBI2. Most of the thioredoxin of yeast is in this complex rather than the well-studied monomer. LMA1 binds to the ATPase SEC18.</text>
</comment>
<comment type="interaction">
    <interactant intactId="EBI-19607">
        <id>P22217</id>
    </interactant>
    <interactant intactId="EBI-19598">
        <id>P22803</id>
        <label>TRX2</label>
    </interactant>
    <organismsDiffer>false</organismsDiffer>
    <experiments>3</experiments>
</comment>
<comment type="subcellular location">
    <subcellularLocation>
        <location evidence="6">Nucleus</location>
    </subcellularLocation>
    <subcellularLocation>
        <location evidence="6 12">Cytoplasm</location>
    </subcellularLocation>
    <subcellularLocation>
        <location evidence="9">Golgi apparatus membrane</location>
        <topology evidence="1">Peripheral membrane protein</topology>
    </subcellularLocation>
    <subcellularLocation>
        <location evidence="9">Mitochondrion intermembrane space</location>
    </subcellularLocation>
</comment>
<comment type="PTM">
    <text>Reversible disulfide bond formation between Cys-30 and Cys-33, reverted by thioredoxin reductase TRR1 using NADPH as hydrogen donor.</text>
</comment>
<comment type="miscellaneous">
    <text evidence="7">Present with 8579 molecules/cell in log phase SD medium.</text>
</comment>
<comment type="miscellaneous">
    <text>Yeast has two cytoplasmic thioredoxins, TRX1 and TRX2, and one mitochondrial, TRX3.</text>
</comment>
<comment type="similarity">
    <text evidence="16">Belongs to the thioredoxin family.</text>
</comment>
<gene>
    <name type="primary">TRX1</name>
    <name type="synonym">TRX2</name>
    <name type="ordered locus">YLR043C</name>
</gene>
<sequence length="103" mass="11235">MVTQFKTASEFDSAIAQDKLVVVDFYATWCGPCKMIAPMIEKFSEQYPQADFYKLDVDELGDVAQKNEVSAMPTLLLFKNGKEVAKVVGANPAAIKQAIAANA</sequence>
<feature type="initiator methionine" description="Removed" evidence="11">
    <location>
        <position position="1"/>
    </location>
</feature>
<feature type="chain" id="PRO_0000120044" description="Thioredoxin-1">
    <location>
        <begin position="2"/>
        <end position="103"/>
    </location>
</feature>
<feature type="domain" description="Thioredoxin" evidence="2">
    <location>
        <begin position="2"/>
        <end position="103"/>
    </location>
</feature>
<feature type="active site" description="Nucleophile">
    <location>
        <position position="30"/>
    </location>
</feature>
<feature type="active site" description="Nucleophile">
    <location>
        <position position="33"/>
    </location>
</feature>
<feature type="site" description="Deprotonates C-terminal active site Cys">
    <location>
        <position position="24"/>
    </location>
</feature>
<feature type="site" description="Contributes to redox potential value">
    <location>
        <position position="31"/>
    </location>
</feature>
<feature type="site" description="Contributes to redox potential value">
    <location>
        <position position="32"/>
    </location>
</feature>
<feature type="disulfide bond" description="Redox-active" evidence="2 8">
    <location>
        <begin position="30"/>
        <end position="33"/>
    </location>
</feature>
<feature type="cross-link" description="Glycyl lysine isopeptide (Lys-Gly) (interchain with G-Cter in ubiquitin)" evidence="17">
    <location>
        <position position="54"/>
    </location>
</feature>
<feature type="cross-link" description="Glycyl lysine isopeptide (Lys-Gly) (interchain with G-Cter in ubiquitin)" evidence="17">
    <location>
        <position position="66"/>
    </location>
</feature>
<feature type="cross-link" description="Glycyl lysine isopeptide (Lys-Gly) (interchain with G-Cter in ubiquitin)" evidence="17">
    <location>
        <position position="96"/>
    </location>
</feature>
<feature type="strand" evidence="19">
    <location>
        <begin position="2"/>
        <end position="4"/>
    </location>
</feature>
<feature type="helix" evidence="18">
    <location>
        <begin position="8"/>
        <end position="15"/>
    </location>
</feature>
<feature type="strand" evidence="18">
    <location>
        <begin position="17"/>
        <end position="19"/>
    </location>
</feature>
<feature type="strand" evidence="18">
    <location>
        <begin position="21"/>
        <end position="26"/>
    </location>
</feature>
<feature type="helix" evidence="18">
    <location>
        <begin position="31"/>
        <end position="46"/>
    </location>
</feature>
<feature type="strand" evidence="18">
    <location>
        <begin position="50"/>
        <end position="56"/>
    </location>
</feature>
<feature type="turn" evidence="18">
    <location>
        <begin position="57"/>
        <end position="59"/>
    </location>
</feature>
<feature type="helix" evidence="18">
    <location>
        <begin position="61"/>
        <end position="66"/>
    </location>
</feature>
<feature type="strand" evidence="18">
    <location>
        <begin position="71"/>
        <end position="79"/>
    </location>
</feature>
<feature type="strand" evidence="18">
    <location>
        <begin position="82"/>
        <end position="90"/>
    </location>
</feature>
<feature type="helix" evidence="18">
    <location>
        <begin position="92"/>
        <end position="102"/>
    </location>
</feature>
<proteinExistence type="evidence at protein level"/>
<organism>
    <name type="scientific">Saccharomyces cerevisiae (strain ATCC 204508 / S288c)</name>
    <name type="common">Baker's yeast</name>
    <dbReference type="NCBI Taxonomy" id="559292"/>
    <lineage>
        <taxon>Eukaryota</taxon>
        <taxon>Fungi</taxon>
        <taxon>Dikarya</taxon>
        <taxon>Ascomycota</taxon>
        <taxon>Saccharomycotina</taxon>
        <taxon>Saccharomycetes</taxon>
        <taxon>Saccharomycetales</taxon>
        <taxon>Saccharomycetaceae</taxon>
        <taxon>Saccharomyces</taxon>
    </lineage>
</organism>
<protein>
    <recommendedName>
        <fullName>Thioredoxin-1</fullName>
    </recommendedName>
    <alternativeName>
        <fullName>Thioredoxin I</fullName>
        <shortName>TR-I</shortName>
    </alternativeName>
    <alternativeName>
        <fullName>Thioredoxin-2</fullName>
    </alternativeName>
</protein>
<accession>P22217</accession>
<accession>D6VY45</accession>
<dbReference type="EMBL" id="M59169">
    <property type="protein sequence ID" value="AAA35171.1"/>
    <property type="molecule type" value="Genomic_DNA"/>
</dbReference>
<dbReference type="EMBL" id="M62647">
    <property type="protein sequence ID" value="AAA35177.1"/>
    <property type="molecule type" value="Genomic_DNA"/>
</dbReference>
<dbReference type="EMBL" id="Z73215">
    <property type="protein sequence ID" value="CAA97572.1"/>
    <property type="molecule type" value="Genomic_DNA"/>
</dbReference>
<dbReference type="EMBL" id="AY558203">
    <property type="protein sequence ID" value="AAS56529.1"/>
    <property type="molecule type" value="Genomic_DNA"/>
</dbReference>
<dbReference type="EMBL" id="BK006945">
    <property type="protein sequence ID" value="DAA09361.1"/>
    <property type="molecule type" value="Genomic_DNA"/>
</dbReference>
<dbReference type="PIR" id="S15048">
    <property type="entry name" value="TXBY2"/>
</dbReference>
<dbReference type="RefSeq" id="NP_013144.1">
    <property type="nucleotide sequence ID" value="NM_001181930.1"/>
</dbReference>
<dbReference type="PDB" id="2I9H">
    <property type="method" value="NMR"/>
    <property type="chains" value="A=1-103"/>
</dbReference>
<dbReference type="PDB" id="2N5A">
    <property type="method" value="NMR"/>
    <property type="chains" value="A=1-103"/>
</dbReference>
<dbReference type="PDB" id="2N5B">
    <property type="method" value="NMR"/>
    <property type="chains" value="A=1-103"/>
</dbReference>
<dbReference type="PDB" id="3F3Q">
    <property type="method" value="X-ray"/>
    <property type="resolution" value="1.76 A"/>
    <property type="chains" value="A=1-103"/>
</dbReference>
<dbReference type="PDB" id="3F3R">
    <property type="method" value="X-ray"/>
    <property type="resolution" value="1.80 A"/>
    <property type="chains" value="A/B=1-103"/>
</dbReference>
<dbReference type="PDBsum" id="2I9H"/>
<dbReference type="PDBsum" id="2N5A"/>
<dbReference type="PDBsum" id="2N5B"/>
<dbReference type="PDBsum" id="3F3Q"/>
<dbReference type="PDBsum" id="3F3R"/>
<dbReference type="BMRB" id="P22217"/>
<dbReference type="SMR" id="P22217"/>
<dbReference type="BioGRID" id="31318">
    <property type="interactions" value="95"/>
</dbReference>
<dbReference type="ComplexPortal" id="CPX-1278">
    <property type="entry name" value="LMA1 complex, TRX1 variant"/>
</dbReference>
<dbReference type="FunCoup" id="P22217">
    <property type="interactions" value="621"/>
</dbReference>
<dbReference type="IntAct" id="P22217">
    <property type="interactions" value="15"/>
</dbReference>
<dbReference type="MINT" id="P22217"/>
<dbReference type="STRING" id="4932.YLR043C"/>
<dbReference type="iPTMnet" id="P22217"/>
<dbReference type="PaxDb" id="4932-YLR043C"/>
<dbReference type="PeptideAtlas" id="P22217"/>
<dbReference type="TopDownProteomics" id="P22217"/>
<dbReference type="EnsemblFungi" id="YLR043C_mRNA">
    <property type="protein sequence ID" value="YLR043C"/>
    <property type="gene ID" value="YLR043C"/>
</dbReference>
<dbReference type="GeneID" id="850732"/>
<dbReference type="KEGG" id="sce:YLR043C"/>
<dbReference type="AGR" id="SGD:S000004033"/>
<dbReference type="SGD" id="S000004033">
    <property type="gene designation" value="TRX1"/>
</dbReference>
<dbReference type="VEuPathDB" id="FungiDB:YLR043C"/>
<dbReference type="eggNOG" id="KOG0907">
    <property type="taxonomic scope" value="Eukaryota"/>
</dbReference>
<dbReference type="GeneTree" id="ENSGT00940000156170"/>
<dbReference type="HOGENOM" id="CLU_090389_14_0_1"/>
<dbReference type="InParanoid" id="P22217"/>
<dbReference type="OMA" id="HIHYVTD"/>
<dbReference type="OrthoDB" id="10263751at2759"/>
<dbReference type="BioCyc" id="YEAST:MONOMER3O-46"/>
<dbReference type="Reactome" id="R-SCE-2559580">
    <property type="pathway name" value="Oxidative Stress Induced Senescence"/>
</dbReference>
<dbReference type="Reactome" id="R-SCE-3299685">
    <property type="pathway name" value="Detoxification of Reactive Oxygen Species"/>
</dbReference>
<dbReference type="Reactome" id="R-SCE-499943">
    <property type="pathway name" value="Interconversion of nucleotide di- and triphosphates"/>
</dbReference>
<dbReference type="Reactome" id="R-SCE-5628897">
    <property type="pathway name" value="TP53 Regulates Metabolic Genes"/>
</dbReference>
<dbReference type="Reactome" id="R-SCE-844456">
    <property type="pathway name" value="The NLRP3 inflammasome"/>
</dbReference>
<dbReference type="BioGRID-ORCS" id="850732">
    <property type="hits" value="0 hits in 10 CRISPR screens"/>
</dbReference>
<dbReference type="EvolutionaryTrace" id="P22217"/>
<dbReference type="PRO" id="PR:P22217"/>
<dbReference type="Proteomes" id="UP000002311">
    <property type="component" value="Chromosome XII"/>
</dbReference>
<dbReference type="RNAct" id="P22217">
    <property type="molecule type" value="protein"/>
</dbReference>
<dbReference type="GO" id="GO:0005737">
    <property type="term" value="C:cytoplasm"/>
    <property type="evidence" value="ECO:0000303"/>
    <property type="project" value="ComplexPortal"/>
</dbReference>
<dbReference type="GO" id="GO:0005829">
    <property type="term" value="C:cytosol"/>
    <property type="evidence" value="ECO:0000314"/>
    <property type="project" value="SGD"/>
</dbReference>
<dbReference type="GO" id="GO:0000324">
    <property type="term" value="C:fungal-type vacuole"/>
    <property type="evidence" value="ECO:0000303"/>
    <property type="project" value="ComplexPortal"/>
</dbReference>
<dbReference type="GO" id="GO:0000139">
    <property type="term" value="C:Golgi membrane"/>
    <property type="evidence" value="ECO:0007669"/>
    <property type="project" value="UniProtKB-SubCell"/>
</dbReference>
<dbReference type="GO" id="GO:0120124">
    <property type="term" value="C:membrane fusion priming complex"/>
    <property type="evidence" value="ECO:0000303"/>
    <property type="project" value="ComplexPortal"/>
</dbReference>
<dbReference type="GO" id="GO:0005758">
    <property type="term" value="C:mitochondrial intermembrane space"/>
    <property type="evidence" value="ECO:0000314"/>
    <property type="project" value="SGD"/>
</dbReference>
<dbReference type="GO" id="GO:0005739">
    <property type="term" value="C:mitochondrion"/>
    <property type="evidence" value="ECO:0007005"/>
    <property type="project" value="SGD"/>
</dbReference>
<dbReference type="GO" id="GO:0005634">
    <property type="term" value="C:nucleus"/>
    <property type="evidence" value="ECO:0007005"/>
    <property type="project" value="SGD"/>
</dbReference>
<dbReference type="GO" id="GO:0015036">
    <property type="term" value="F:disulfide oxidoreductase activity"/>
    <property type="evidence" value="ECO:0000314"/>
    <property type="project" value="SGD"/>
</dbReference>
<dbReference type="GO" id="GO:0015035">
    <property type="term" value="F:protein-disulfide reductase activity"/>
    <property type="evidence" value="ECO:0007669"/>
    <property type="project" value="InterPro"/>
</dbReference>
<dbReference type="GO" id="GO:0045454">
    <property type="term" value="P:cell redox homeostasis"/>
    <property type="evidence" value="ECO:0000316"/>
    <property type="project" value="SGD"/>
</dbReference>
<dbReference type="GO" id="GO:0009263">
    <property type="term" value="P:deoxyribonucleotide biosynthetic process"/>
    <property type="evidence" value="ECO:0007669"/>
    <property type="project" value="UniProtKB-KW"/>
</dbReference>
<dbReference type="GO" id="GO:0006888">
    <property type="term" value="P:endoplasmic reticulum to Golgi vesicle-mediated transport"/>
    <property type="evidence" value="ECO:0000314"/>
    <property type="project" value="SGD"/>
</dbReference>
<dbReference type="GO" id="GO:0015031">
    <property type="term" value="P:protein transport"/>
    <property type="evidence" value="ECO:0007669"/>
    <property type="project" value="UniProtKB-KW"/>
</dbReference>
<dbReference type="GO" id="GO:0006890">
    <property type="term" value="P:retrograde vesicle-mediated transport, Golgi to endoplasmic reticulum"/>
    <property type="evidence" value="ECO:0000314"/>
    <property type="project" value="SGD"/>
</dbReference>
<dbReference type="GO" id="GO:0042144">
    <property type="term" value="P:vacuole fusion, non-autophagic"/>
    <property type="evidence" value="ECO:0000314"/>
    <property type="project" value="SGD"/>
</dbReference>
<dbReference type="GO" id="GO:0000011">
    <property type="term" value="P:vacuole inheritance"/>
    <property type="evidence" value="ECO:0000315"/>
    <property type="project" value="SGD"/>
</dbReference>
<dbReference type="CDD" id="cd02947">
    <property type="entry name" value="TRX_family"/>
    <property type="match status" value="1"/>
</dbReference>
<dbReference type="FunFam" id="3.40.30.10:FF:000104">
    <property type="entry name" value="Thioredoxin"/>
    <property type="match status" value="1"/>
</dbReference>
<dbReference type="Gene3D" id="3.40.30.10">
    <property type="entry name" value="Glutaredoxin"/>
    <property type="match status" value="1"/>
</dbReference>
<dbReference type="InterPro" id="IPR005746">
    <property type="entry name" value="Thioredoxin"/>
</dbReference>
<dbReference type="InterPro" id="IPR036249">
    <property type="entry name" value="Thioredoxin-like_sf"/>
</dbReference>
<dbReference type="InterPro" id="IPR017937">
    <property type="entry name" value="Thioredoxin_CS"/>
</dbReference>
<dbReference type="InterPro" id="IPR013766">
    <property type="entry name" value="Thioredoxin_domain"/>
</dbReference>
<dbReference type="NCBIfam" id="TIGR01068">
    <property type="entry name" value="thioredoxin"/>
    <property type="match status" value="1"/>
</dbReference>
<dbReference type="PANTHER" id="PTHR46115">
    <property type="entry name" value="THIOREDOXIN-LIKE PROTEIN 1"/>
    <property type="match status" value="1"/>
</dbReference>
<dbReference type="Pfam" id="PF00085">
    <property type="entry name" value="Thioredoxin"/>
    <property type="match status" value="1"/>
</dbReference>
<dbReference type="PIRSF" id="PIRSF000077">
    <property type="entry name" value="Thioredoxin"/>
    <property type="match status" value="1"/>
</dbReference>
<dbReference type="PRINTS" id="PR00421">
    <property type="entry name" value="THIOREDOXIN"/>
</dbReference>
<dbReference type="SUPFAM" id="SSF52833">
    <property type="entry name" value="Thioredoxin-like"/>
    <property type="match status" value="1"/>
</dbReference>
<dbReference type="PROSITE" id="PS00194">
    <property type="entry name" value="THIOREDOXIN_1"/>
    <property type="match status" value="1"/>
</dbReference>
<dbReference type="PROSITE" id="PS51352">
    <property type="entry name" value="THIOREDOXIN_2"/>
    <property type="match status" value="1"/>
</dbReference>
<keyword id="KW-0002">3D-structure</keyword>
<keyword id="KW-0963">Cytoplasm</keyword>
<keyword id="KW-0215">Deoxyribonucleotide synthesis</keyword>
<keyword id="KW-0903">Direct protein sequencing</keyword>
<keyword id="KW-1015">Disulfide bond</keyword>
<keyword id="KW-0249">Electron transport</keyword>
<keyword id="KW-0333">Golgi apparatus</keyword>
<keyword id="KW-1017">Isopeptide bond</keyword>
<keyword id="KW-0472">Membrane</keyword>
<keyword id="KW-0496">Mitochondrion</keyword>
<keyword id="KW-0539">Nucleus</keyword>
<keyword id="KW-0653">Protein transport</keyword>
<keyword id="KW-0676">Redox-active center</keyword>
<keyword id="KW-1185">Reference proteome</keyword>
<keyword id="KW-0813">Transport</keyword>
<keyword id="KW-0832">Ubl conjugation</keyword>
<evidence type="ECO:0000255" key="1"/>
<evidence type="ECO:0000255" key="2">
    <source>
        <dbReference type="PROSITE-ProRule" id="PRU00691"/>
    </source>
</evidence>
<evidence type="ECO:0000269" key="3">
    <source>
    </source>
</evidence>
<evidence type="ECO:0000269" key="4">
    <source>
    </source>
</evidence>
<evidence type="ECO:0000269" key="5">
    <source>
    </source>
</evidence>
<evidence type="ECO:0000269" key="6">
    <source>
    </source>
</evidence>
<evidence type="ECO:0000269" key="7">
    <source>
    </source>
</evidence>
<evidence type="ECO:0000269" key="8">
    <source>
    </source>
</evidence>
<evidence type="ECO:0000269" key="9">
    <source>
    </source>
</evidence>
<evidence type="ECO:0000269" key="10">
    <source>
    </source>
</evidence>
<evidence type="ECO:0000269" key="11">
    <source>
    </source>
</evidence>
<evidence type="ECO:0000269" key="12">
    <source>
    </source>
</evidence>
<evidence type="ECO:0000269" key="13">
    <source>
    </source>
</evidence>
<evidence type="ECO:0000269" key="14">
    <source>
    </source>
</evidence>
<evidence type="ECO:0000269" key="15">
    <source>
    </source>
</evidence>
<evidence type="ECO:0000305" key="16"/>
<evidence type="ECO:0007744" key="17">
    <source>
    </source>
</evidence>
<evidence type="ECO:0007829" key="18">
    <source>
        <dbReference type="PDB" id="3F3Q"/>
    </source>
</evidence>
<evidence type="ECO:0007829" key="19">
    <source>
        <dbReference type="PDB" id="3F3R"/>
    </source>
</evidence>